<feature type="chain" id="PRO_0000429371" description="L-malyl-CoA/beta-methylmalyl-CoA lyase">
    <location>
        <begin position="1"/>
        <end position="346"/>
    </location>
</feature>
<feature type="binding site" evidence="3">
    <location>
        <position position="148"/>
    </location>
    <ligand>
        <name>Mg(2+)</name>
        <dbReference type="ChEBI" id="CHEBI:18420"/>
    </ligand>
</feature>
<feature type="binding site" evidence="1">
    <location>
        <begin position="176"/>
        <end position="177"/>
    </location>
    <ligand>
        <name>substrate</name>
    </ligand>
</feature>
<feature type="binding site" evidence="3">
    <location>
        <position position="177"/>
    </location>
    <ligand>
        <name>Mg(2+)</name>
        <dbReference type="ChEBI" id="CHEBI:18420"/>
    </ligand>
</feature>
<feature type="binding site" evidence="1">
    <location>
        <begin position="253"/>
        <end position="254"/>
    </location>
    <ligand>
        <name>substrate</name>
    </ligand>
</feature>
<name>MCAL_HALMA</name>
<reference key="1">
    <citation type="journal article" date="2004" name="Genome Res.">
        <title>Genome sequence of Haloarcula marismortui: a halophilic archaeon from the Dead Sea.</title>
        <authorList>
            <person name="Baliga N.S."/>
            <person name="Bonneau R."/>
            <person name="Facciotti M.T."/>
            <person name="Pan M."/>
            <person name="Glusman G."/>
            <person name="Deutsch E.W."/>
            <person name="Shannon P."/>
            <person name="Chiu Y."/>
            <person name="Weng R.S."/>
            <person name="Gan R.R."/>
            <person name="Hung P."/>
            <person name="Date S.V."/>
            <person name="Marcotte E."/>
            <person name="Hood L."/>
            <person name="Ng W.V."/>
        </authorList>
    </citation>
    <scope>NUCLEOTIDE SEQUENCE [LARGE SCALE GENOMIC DNA]</scope>
    <source>
        <strain>ATCC 43049 / DSM 3752 / JCM 8966 / VKM B-1809</strain>
    </source>
</reference>
<reference key="2">
    <citation type="journal article" date="2011" name="Science">
        <title>A methylaspartate cycle in haloarchaea.</title>
        <authorList>
            <person name="Khomyakova M."/>
            <person name="Bukmez O."/>
            <person name="Thomas L.K."/>
            <person name="Erb T.J."/>
            <person name="Berg I.A."/>
        </authorList>
    </citation>
    <scope>FUNCTION</scope>
    <scope>CATALYTIC ACTIVITY</scope>
    <scope>BIOPHYSICOCHEMICAL PROPERTIES</scope>
    <scope>SUBSTRATE SPECIFICITY</scope>
    <scope>COFACTOR</scope>
    <source>
        <strain>ATCC 43049 / DSM 3752 / JCM 8966 / VKM B-1809</strain>
    </source>
</reference>
<keyword id="KW-0456">Lyase</keyword>
<keyword id="KW-0460">Magnesium</keyword>
<keyword id="KW-0464">Manganese</keyword>
<keyword id="KW-0479">Metal-binding</keyword>
<keyword id="KW-1185">Reference proteome</keyword>
<protein>
    <recommendedName>
        <fullName>L-malyl-CoA/beta-methylmalyl-CoA lyase</fullName>
        <ecNumber>4.1.3.24</ecNumber>
    </recommendedName>
    <alternativeName>
        <fullName>(3S)-malyl-CoA/beta-methylmalyl-CoA lyase</fullName>
    </alternativeName>
</protein>
<dbReference type="EC" id="4.1.3.24"/>
<dbReference type="EMBL" id="AY596297">
    <property type="protein sequence ID" value="AAV45689.1"/>
    <property type="molecule type" value="Genomic_DNA"/>
</dbReference>
<dbReference type="RefSeq" id="WP_011223176.1">
    <property type="nucleotide sequence ID" value="NC_006396.1"/>
</dbReference>
<dbReference type="SMR" id="Q5V463"/>
<dbReference type="STRING" id="272569.rrnAC0690"/>
<dbReference type="PaxDb" id="272569-rrnAC0690"/>
<dbReference type="DNASU" id="3127901"/>
<dbReference type="EnsemblBacteria" id="AAV45689">
    <property type="protein sequence ID" value="AAV45689"/>
    <property type="gene ID" value="rrnAC0690"/>
</dbReference>
<dbReference type="GeneID" id="40151728"/>
<dbReference type="KEGG" id="hma:rrnAC0690"/>
<dbReference type="PATRIC" id="fig|272569.17.peg.1438"/>
<dbReference type="eggNOG" id="arCOG00760">
    <property type="taxonomic scope" value="Archaea"/>
</dbReference>
<dbReference type="HOGENOM" id="CLU_800782_0_0_2"/>
<dbReference type="BioCyc" id="MetaCyc:MONOMER-16252"/>
<dbReference type="SABIO-RK" id="Q5V463"/>
<dbReference type="Proteomes" id="UP000001169">
    <property type="component" value="Chromosome I"/>
</dbReference>
<dbReference type="GO" id="GO:0043959">
    <property type="term" value="F:L-erythro-3-methylmalyl-CoA lyase activity"/>
    <property type="evidence" value="ECO:0007669"/>
    <property type="project" value="RHEA"/>
</dbReference>
<dbReference type="GO" id="GO:0000287">
    <property type="term" value="F:magnesium ion binding"/>
    <property type="evidence" value="ECO:0007669"/>
    <property type="project" value="TreeGrafter"/>
</dbReference>
<dbReference type="GO" id="GO:0050083">
    <property type="term" value="F:malyl-CoA lyase activity"/>
    <property type="evidence" value="ECO:0000314"/>
    <property type="project" value="UniProtKB"/>
</dbReference>
<dbReference type="GO" id="GO:0046872">
    <property type="term" value="F:metal ion binding"/>
    <property type="evidence" value="ECO:0000314"/>
    <property type="project" value="UniProtKB"/>
</dbReference>
<dbReference type="GO" id="GO:0006107">
    <property type="term" value="P:oxaloacetate metabolic process"/>
    <property type="evidence" value="ECO:0007669"/>
    <property type="project" value="TreeGrafter"/>
</dbReference>
<dbReference type="Gene3D" id="3.20.20.60">
    <property type="entry name" value="Phosphoenolpyruvate-binding domains"/>
    <property type="match status" value="1"/>
</dbReference>
<dbReference type="InterPro" id="IPR005000">
    <property type="entry name" value="Aldolase/citrate-lyase_domain"/>
</dbReference>
<dbReference type="InterPro" id="IPR015813">
    <property type="entry name" value="Pyrv/PenolPyrv_kinase-like_dom"/>
</dbReference>
<dbReference type="InterPro" id="IPR040442">
    <property type="entry name" value="Pyrv_kinase-like_dom_sf"/>
</dbReference>
<dbReference type="NCBIfam" id="NF041626">
    <property type="entry name" value="malyCoAlyase_Halo"/>
    <property type="match status" value="1"/>
</dbReference>
<dbReference type="PANTHER" id="PTHR32308:SF10">
    <property type="entry name" value="CITRATE LYASE SUBUNIT BETA"/>
    <property type="match status" value="1"/>
</dbReference>
<dbReference type="PANTHER" id="PTHR32308">
    <property type="entry name" value="LYASE BETA SUBUNIT, PUTATIVE (AFU_ORTHOLOGUE AFUA_4G13030)-RELATED"/>
    <property type="match status" value="1"/>
</dbReference>
<dbReference type="Pfam" id="PF03328">
    <property type="entry name" value="HpcH_HpaI"/>
    <property type="match status" value="1"/>
</dbReference>
<dbReference type="SUPFAM" id="SSF51621">
    <property type="entry name" value="Phosphoenolpyruvate/pyruvate domain"/>
    <property type="match status" value="1"/>
</dbReference>
<comment type="function">
    <text evidence="2">Involved in the methylaspartate cycle. Catalyzes the reversible cleavage of beta-methylmalyl-CoA to propionyl-CoA and glyoxylate, as well as the reversible cleavage of (S)-malyl-CoA to acetyl-CoA and glyoxylate. In addition, it has a small malyl-CoA thioesterase activity. It can also catalyze the cleavage of (S)-citramalyl-CoA to acetyl-CoA and pyruvate.</text>
</comment>
<comment type="catalytic activity">
    <reaction evidence="2">
        <text>(S)-malyl-CoA = glyoxylate + acetyl-CoA</text>
        <dbReference type="Rhea" id="RHEA:16629"/>
        <dbReference type="ChEBI" id="CHEBI:36655"/>
        <dbReference type="ChEBI" id="CHEBI:57288"/>
        <dbReference type="ChEBI" id="CHEBI:57317"/>
        <dbReference type="EC" id="4.1.3.24"/>
    </reaction>
</comment>
<comment type="catalytic activity">
    <reaction evidence="2">
        <text>(2R,3S)-beta-methylmalyl-CoA = propanoyl-CoA + glyoxylate</text>
        <dbReference type="Rhea" id="RHEA:38259"/>
        <dbReference type="ChEBI" id="CHEBI:36655"/>
        <dbReference type="ChEBI" id="CHEBI:57392"/>
        <dbReference type="ChEBI" id="CHEBI:75634"/>
        <dbReference type="EC" id="4.1.3.24"/>
    </reaction>
</comment>
<comment type="cofactor">
    <cofactor evidence="2">
        <name>Mg(2+)</name>
        <dbReference type="ChEBI" id="CHEBI:18420"/>
    </cofactor>
    <cofactor evidence="2">
        <name>Mn(2+)</name>
        <dbReference type="ChEBI" id="CHEBI:29035"/>
    </cofactor>
    <text evidence="2">Divalent cations such as magnesium or manganese.</text>
</comment>
<comment type="biophysicochemical properties">
    <kinetics>
        <KM evidence="2">0.016 mM for (S)-malyl-CoA (cleavage reaction)</KM>
        <KM evidence="2">0.05 mM for acetyl-CoA (condensation reaction with glyoxylate)</KM>
        <KM evidence="2">0.08 mM for erythro-beta-methylmalyl-CoA (cleavage reaction)</KM>
        <KM evidence="2">0.2 mM for propionyl-CoA (condensation reaction with glyoxylate)</KM>
        <KM evidence="2">1 mM for (S)-citramalyl-CoA (cleavage reaction)</KM>
        <KM evidence="2">17.1 mM for glyoxylate (condensation reaction with propionyl-CoA)</KM>
        <KM evidence="2">26.8 mM for glyoxylate (condensation reaction with acetyl-CoA)</KM>
        <Vmax evidence="2">9.3 umol/min/mg enzyme toward propionyl-CoA (condensation reaction with glyoxylate)</Vmax>
        <Vmax evidence="2">3.6 umol/min/mg enzyme toward (S)-citramalyl-CoA (cleavage reaction)</Vmax>
        <Vmax evidence="2">1.9 umol/min/mg enzyme toward acetyl-CoA (condensation reaction with glyoxylate)</Vmax>
        <Vmax evidence="2">0.3 umol/min/mg enzyme toward erythro-beta-methylmalyl-CoA (cleavage reaction)</Vmax>
        <Vmax evidence="2">0.07 umol/min/mg enzyme toward (S)-malyl-CoA (cleavage reaction)</Vmax>
    </kinetics>
</comment>
<comment type="similarity">
    <text evidence="3">Belongs to the HpcH/HpaI aldolase family.</text>
</comment>
<evidence type="ECO:0000250" key="1"/>
<evidence type="ECO:0000269" key="2">
    <source>
    </source>
</evidence>
<evidence type="ECO:0000305" key="3"/>
<organism>
    <name type="scientific">Haloarcula marismortui (strain ATCC 43049 / DSM 3752 / JCM 8966 / VKM B-1809)</name>
    <name type="common">Halobacterium marismortui</name>
    <dbReference type="NCBI Taxonomy" id="272569"/>
    <lineage>
        <taxon>Archaea</taxon>
        <taxon>Methanobacteriati</taxon>
        <taxon>Methanobacteriota</taxon>
        <taxon>Stenosarchaea group</taxon>
        <taxon>Halobacteria</taxon>
        <taxon>Halobacteriales</taxon>
        <taxon>Haloarculaceae</taxon>
        <taxon>Haloarcula</taxon>
    </lineage>
</organism>
<sequence>MTRLCRTFQTAPAAIPNDNSAKFLVSGLTSKGFQAPDWLVPDIEDGTAPSMKDEAVDNIIEHIPDHADDFAGDILPRVEWAYDDANARERGIEQVTRLAEAVGEELDGFVFPKVGRLDDVRDAAGVIADAERDAGLPEGTLEMAIILETAPGRSDLREICQYATDSRLSGLVFGPVDYTAELGGRTLDGERPRWDGLLEALSNETSAADIVAIGGPFDQLFHERAGVTYYNAEGYADQVAYEATIGIDGSWSLHPKQTEQANRIHMPTVEEMERDLHKIESFNEAKREGTGAVVVDGQMVDEATYKNFANTVKTVRAIDETHPAQTEAYYDDDLLARARDVELIFG</sequence>
<proteinExistence type="evidence at protein level"/>
<gene>
    <name type="primary">citE1</name>
    <name type="ordered locus">rrnAC0690</name>
</gene>
<accession>Q5V463</accession>